<organism>
    <name type="scientific">Methanocella arvoryzae (strain DSM 22066 / NBRC 105507 / MRE50)</name>
    <dbReference type="NCBI Taxonomy" id="351160"/>
    <lineage>
        <taxon>Archaea</taxon>
        <taxon>Methanobacteriati</taxon>
        <taxon>Methanobacteriota</taxon>
        <taxon>Stenosarchaea group</taxon>
        <taxon>Methanomicrobia</taxon>
        <taxon>Methanocellales</taxon>
        <taxon>Methanocellaceae</taxon>
        <taxon>Methanocella</taxon>
    </lineage>
</organism>
<gene>
    <name type="ordered locus">UNCMA_27800</name>
    <name type="ORF">LRC440</name>
</gene>
<protein>
    <recommendedName>
        <fullName evidence="1">Cysteate synthase</fullName>
        <shortName evidence="1">CS</shortName>
        <shortName evidence="1">Cya synthase</shortName>
        <ecNumber evidence="1">2.5.1.76</ecNumber>
    </recommendedName>
</protein>
<sequence>MGEYTLVCPCSGKTVPDHYTLNCDCGSLIRTEYAARQLTLRNLPGMWKFYDWLPASGHTDTPGTTVTYRSEGLAKELGIDLHVAFNGYWPELGADMKTCSFKELEAPPTIVRAKEHGGKAMVLASAGNTARAFSYLSTITGFPLIVVVPKQNIDRLWIPGREPGASVKLISVGGGCDYTDAINLSNRIAALPGMMPEGGAKNVARRDGMGTVMLDAAVTMKGMPDDYFQAIGSGTGGIAAWEASMRLRADGRFGSKLPRLHLAQNLPFVPMLNAWKEGRREIIPERDMPDAKKSIAEMYSDVLSNRTPPYGVGGGVFDAMKATDGLMYGITREEAVAAKKLFEAREGIDILPPAAVAVAALVQASEKGLLEGRKVVLNVTGGGQERLMKEVPIYQVEPVLEVPGPDVPMEEILKVIA</sequence>
<keyword id="KW-0174">Coenzyme M biosynthesis</keyword>
<keyword id="KW-0663">Pyridoxal phosphate</keyword>
<keyword id="KW-1185">Reference proteome</keyword>
<keyword id="KW-0808">Transferase</keyword>
<reference key="1">
    <citation type="journal article" date="2006" name="Science">
        <title>Genome of rice cluster I archaea -- the key methane producers in the rice rhizosphere.</title>
        <authorList>
            <person name="Erkel C."/>
            <person name="Kube M."/>
            <person name="Reinhardt R."/>
            <person name="Liesack W."/>
        </authorList>
    </citation>
    <scope>NUCLEOTIDE SEQUENCE [LARGE SCALE GENOMIC DNA]</scope>
    <source>
        <strain>DSM 22066 / NBRC 105507 / MRE50</strain>
    </source>
</reference>
<accession>Q0W896</accession>
<dbReference type="EC" id="2.5.1.76" evidence="1"/>
<dbReference type="EMBL" id="AM114193">
    <property type="protein sequence ID" value="CAJ35397.1"/>
    <property type="molecule type" value="Genomic_DNA"/>
</dbReference>
<dbReference type="RefSeq" id="WP_012037095.1">
    <property type="nucleotide sequence ID" value="NC_009464.1"/>
</dbReference>
<dbReference type="SMR" id="Q0W896"/>
<dbReference type="STRING" id="351160.LRC440"/>
<dbReference type="GeneID" id="5144375"/>
<dbReference type="KEGG" id="rci:LRC440"/>
<dbReference type="PATRIC" id="fig|351160.9.peg.2846"/>
<dbReference type="eggNOG" id="arCOG01434">
    <property type="taxonomic scope" value="Archaea"/>
</dbReference>
<dbReference type="OrthoDB" id="6371at2157"/>
<dbReference type="UniPathway" id="UPA00355"/>
<dbReference type="Proteomes" id="UP000000663">
    <property type="component" value="Chromosome"/>
</dbReference>
<dbReference type="GO" id="GO:0005524">
    <property type="term" value="F:ATP binding"/>
    <property type="evidence" value="ECO:0007669"/>
    <property type="project" value="TreeGrafter"/>
</dbReference>
<dbReference type="GO" id="GO:0044686">
    <property type="term" value="F:cysteate synthase activity"/>
    <property type="evidence" value="ECO:0007669"/>
    <property type="project" value="UniProtKB-UniRule"/>
</dbReference>
<dbReference type="GO" id="GO:0003941">
    <property type="term" value="F:L-serine ammonia-lyase activity"/>
    <property type="evidence" value="ECO:0007669"/>
    <property type="project" value="TreeGrafter"/>
</dbReference>
<dbReference type="GO" id="GO:0000287">
    <property type="term" value="F:magnesium ion binding"/>
    <property type="evidence" value="ECO:0007669"/>
    <property type="project" value="TreeGrafter"/>
</dbReference>
<dbReference type="GO" id="GO:0030170">
    <property type="term" value="F:pyridoxal phosphate binding"/>
    <property type="evidence" value="ECO:0007669"/>
    <property type="project" value="UniProtKB-UniRule"/>
</dbReference>
<dbReference type="GO" id="GO:0030378">
    <property type="term" value="F:serine racemase activity"/>
    <property type="evidence" value="ECO:0007669"/>
    <property type="project" value="TreeGrafter"/>
</dbReference>
<dbReference type="GO" id="GO:0018114">
    <property type="term" value="F:threonine racemase activity"/>
    <property type="evidence" value="ECO:0007669"/>
    <property type="project" value="TreeGrafter"/>
</dbReference>
<dbReference type="GO" id="GO:0019295">
    <property type="term" value="P:coenzyme M biosynthetic process"/>
    <property type="evidence" value="ECO:0007669"/>
    <property type="project" value="UniProtKB-UniRule"/>
</dbReference>
<dbReference type="GO" id="GO:0070179">
    <property type="term" value="P:D-serine biosynthetic process"/>
    <property type="evidence" value="ECO:0007669"/>
    <property type="project" value="TreeGrafter"/>
</dbReference>
<dbReference type="Gene3D" id="3.40.50.1100">
    <property type="match status" value="2"/>
</dbReference>
<dbReference type="HAMAP" id="MF_02109">
    <property type="entry name" value="Cya_synthase"/>
    <property type="match status" value="1"/>
</dbReference>
<dbReference type="InterPro" id="IPR022401">
    <property type="entry name" value="Cysteate_synthase"/>
</dbReference>
<dbReference type="InterPro" id="IPR001926">
    <property type="entry name" value="TrpB-like_PALP"/>
</dbReference>
<dbReference type="InterPro" id="IPR036052">
    <property type="entry name" value="TrpB-like_PALP_sf"/>
</dbReference>
<dbReference type="NCBIfam" id="TIGR03844">
    <property type="entry name" value="cysteate_syn"/>
    <property type="match status" value="1"/>
</dbReference>
<dbReference type="PANTHER" id="PTHR43050">
    <property type="entry name" value="SERINE / THREONINE RACEMASE FAMILY MEMBER"/>
    <property type="match status" value="1"/>
</dbReference>
<dbReference type="PANTHER" id="PTHR43050:SF1">
    <property type="entry name" value="SERINE RACEMASE"/>
    <property type="match status" value="1"/>
</dbReference>
<dbReference type="Pfam" id="PF00291">
    <property type="entry name" value="PALP"/>
    <property type="match status" value="1"/>
</dbReference>
<dbReference type="SUPFAM" id="SSF53686">
    <property type="entry name" value="Tryptophan synthase beta subunit-like PLP-dependent enzymes"/>
    <property type="match status" value="1"/>
</dbReference>
<feature type="chain" id="PRO_0000392656" description="Cysteate synthase">
    <location>
        <begin position="1"/>
        <end position="417"/>
    </location>
</feature>
<feature type="binding site" evidence="1">
    <location>
        <position position="128"/>
    </location>
    <ligand>
        <name>pyridoxal 5'-phosphate</name>
        <dbReference type="ChEBI" id="CHEBI:597326"/>
    </ligand>
</feature>
<feature type="binding site" evidence="1">
    <location>
        <position position="380"/>
    </location>
    <ligand>
        <name>pyridoxal 5'-phosphate</name>
        <dbReference type="ChEBI" id="CHEBI:597326"/>
    </ligand>
</feature>
<feature type="modified residue" description="N6-(pyridoxal phosphate)lysine" evidence="1">
    <location>
        <position position="102"/>
    </location>
</feature>
<proteinExistence type="inferred from homology"/>
<name>CYAS_METAR</name>
<evidence type="ECO:0000255" key="1">
    <source>
        <dbReference type="HAMAP-Rule" id="MF_02109"/>
    </source>
</evidence>
<comment type="function">
    <text evidence="1">Specifically catalyzes the beta-elimination of phosphate from L-phosphoserine and the beta-addition of sulfite to the dehydroalanine intermediate to produce L-cysteate.</text>
</comment>
<comment type="catalytic activity">
    <reaction evidence="1">
        <text>O-phospho-L-serine + sulfite + H(+) = L-cysteate + phosphate</text>
        <dbReference type="Rhea" id="RHEA:26486"/>
        <dbReference type="ChEBI" id="CHEBI:15378"/>
        <dbReference type="ChEBI" id="CHEBI:17359"/>
        <dbReference type="ChEBI" id="CHEBI:43474"/>
        <dbReference type="ChEBI" id="CHEBI:57524"/>
        <dbReference type="ChEBI" id="CHEBI:58090"/>
        <dbReference type="EC" id="2.5.1.76"/>
    </reaction>
</comment>
<comment type="cofactor">
    <cofactor evidence="1">
        <name>pyridoxal 5'-phosphate</name>
        <dbReference type="ChEBI" id="CHEBI:597326"/>
    </cofactor>
</comment>
<comment type="pathway">
    <text evidence="1">Cofactor biosynthesis; coenzyme M biosynthesis.</text>
</comment>
<comment type="subunit">
    <text evidence="1">Homotrimer.</text>
</comment>
<comment type="similarity">
    <text evidence="1">Belongs to the threonine synthase family. Cysteate synthase subfamily.</text>
</comment>